<comment type="function">
    <text evidence="1">Catalyzes the condensation reaction of fatty acid synthesis by the addition to an acyl acceptor of two carbons from malonyl-ACP. Catalyzes the first condensation reaction which initiates fatty acid synthesis and may therefore play a role in governing the total rate of fatty acid production. Possesses both acetoacetyl-ACP synthase and acetyl transacylase activities. Its substrate specificity determines the biosynthesis of branched-chain and/or straight-chain of fatty acids.</text>
</comment>
<comment type="catalytic activity">
    <reaction evidence="1">
        <text>malonyl-[ACP] + acetyl-CoA + H(+) = 3-oxobutanoyl-[ACP] + CO2 + CoA</text>
        <dbReference type="Rhea" id="RHEA:12080"/>
        <dbReference type="Rhea" id="RHEA-COMP:9623"/>
        <dbReference type="Rhea" id="RHEA-COMP:9625"/>
        <dbReference type="ChEBI" id="CHEBI:15378"/>
        <dbReference type="ChEBI" id="CHEBI:16526"/>
        <dbReference type="ChEBI" id="CHEBI:57287"/>
        <dbReference type="ChEBI" id="CHEBI:57288"/>
        <dbReference type="ChEBI" id="CHEBI:78449"/>
        <dbReference type="ChEBI" id="CHEBI:78450"/>
        <dbReference type="EC" id="2.3.1.180"/>
    </reaction>
</comment>
<comment type="pathway">
    <text evidence="1">Lipid metabolism; fatty acid biosynthesis.</text>
</comment>
<comment type="subunit">
    <text evidence="1">Homodimer.</text>
</comment>
<comment type="subcellular location">
    <subcellularLocation>
        <location evidence="1">Cytoplasm</location>
    </subcellularLocation>
</comment>
<comment type="domain">
    <text evidence="1">The last Arg residue of the ACP-binding site is essential for the weak association between ACP/AcpP and FabH.</text>
</comment>
<comment type="similarity">
    <text evidence="1">Belongs to the thiolase-like superfamily. FabH family.</text>
</comment>
<dbReference type="EC" id="2.3.1.180" evidence="1"/>
<dbReference type="EMBL" id="CP000825">
    <property type="protein sequence ID" value="ABV49772.1"/>
    <property type="molecule type" value="Genomic_DNA"/>
</dbReference>
<dbReference type="RefSeq" id="WP_012006951.1">
    <property type="nucleotide sequence ID" value="NC_009840.1"/>
</dbReference>
<dbReference type="SMR" id="A8G2E1"/>
<dbReference type="STRING" id="93060.P9215_01531"/>
<dbReference type="KEGG" id="pmh:P9215_01531"/>
<dbReference type="eggNOG" id="COG0332">
    <property type="taxonomic scope" value="Bacteria"/>
</dbReference>
<dbReference type="HOGENOM" id="CLU_039592_0_1_3"/>
<dbReference type="OrthoDB" id="9815506at2"/>
<dbReference type="UniPathway" id="UPA00094"/>
<dbReference type="Proteomes" id="UP000002014">
    <property type="component" value="Chromosome"/>
</dbReference>
<dbReference type="GO" id="GO:0005737">
    <property type="term" value="C:cytoplasm"/>
    <property type="evidence" value="ECO:0007669"/>
    <property type="project" value="UniProtKB-SubCell"/>
</dbReference>
<dbReference type="GO" id="GO:0004315">
    <property type="term" value="F:3-oxoacyl-[acyl-carrier-protein] synthase activity"/>
    <property type="evidence" value="ECO:0007669"/>
    <property type="project" value="InterPro"/>
</dbReference>
<dbReference type="GO" id="GO:0033818">
    <property type="term" value="F:beta-ketoacyl-acyl-carrier-protein synthase III activity"/>
    <property type="evidence" value="ECO:0007669"/>
    <property type="project" value="UniProtKB-UniRule"/>
</dbReference>
<dbReference type="GO" id="GO:0006633">
    <property type="term" value="P:fatty acid biosynthetic process"/>
    <property type="evidence" value="ECO:0007669"/>
    <property type="project" value="UniProtKB-UniRule"/>
</dbReference>
<dbReference type="CDD" id="cd00830">
    <property type="entry name" value="KAS_III"/>
    <property type="match status" value="1"/>
</dbReference>
<dbReference type="FunFam" id="3.40.47.10:FF:000004">
    <property type="entry name" value="3-oxoacyl-[acyl-carrier-protein] synthase 3"/>
    <property type="match status" value="1"/>
</dbReference>
<dbReference type="Gene3D" id="3.40.47.10">
    <property type="match status" value="1"/>
</dbReference>
<dbReference type="HAMAP" id="MF_01815">
    <property type="entry name" value="FabH"/>
    <property type="match status" value="1"/>
</dbReference>
<dbReference type="InterPro" id="IPR013747">
    <property type="entry name" value="ACP_syn_III_C"/>
</dbReference>
<dbReference type="InterPro" id="IPR013751">
    <property type="entry name" value="ACP_syn_III_N"/>
</dbReference>
<dbReference type="InterPro" id="IPR004655">
    <property type="entry name" value="FabH"/>
</dbReference>
<dbReference type="InterPro" id="IPR016039">
    <property type="entry name" value="Thiolase-like"/>
</dbReference>
<dbReference type="NCBIfam" id="TIGR00747">
    <property type="entry name" value="fabH"/>
    <property type="match status" value="1"/>
</dbReference>
<dbReference type="NCBIfam" id="NF006829">
    <property type="entry name" value="PRK09352.1"/>
    <property type="match status" value="1"/>
</dbReference>
<dbReference type="PANTHER" id="PTHR43091">
    <property type="entry name" value="3-OXOACYL-[ACYL-CARRIER-PROTEIN] SYNTHASE"/>
    <property type="match status" value="1"/>
</dbReference>
<dbReference type="PANTHER" id="PTHR43091:SF1">
    <property type="entry name" value="BETA-KETOACYL-[ACYL-CARRIER-PROTEIN] SYNTHASE III, CHLOROPLASTIC"/>
    <property type="match status" value="1"/>
</dbReference>
<dbReference type="Pfam" id="PF08545">
    <property type="entry name" value="ACP_syn_III"/>
    <property type="match status" value="1"/>
</dbReference>
<dbReference type="Pfam" id="PF08541">
    <property type="entry name" value="ACP_syn_III_C"/>
    <property type="match status" value="1"/>
</dbReference>
<dbReference type="SUPFAM" id="SSF53901">
    <property type="entry name" value="Thiolase-like"/>
    <property type="match status" value="1"/>
</dbReference>
<sequence>MEEIKFNQIGVSFKGSGSYVPDQILTNEEISQKVDTSDEWIKSRTGISERRISRVEDNVADMGYKAALTAIEMANWDIKTIDLIVLATSTPHDLFGSAPSIQSKLGASNAVAFDLTAACSGFLFALITTSQFLKAGNFKRALVVGADQLSSFVDWNDRRSCILFGDGAGALAIEATNEFDNFIGFDMRTDGERGCFLNLPSKNNEDSIIDNIEFLSGGFSPIQMNGQEVYKFAVKEVPIILDKLFKKTNYSSDEVDWLILHQANQRILDSVGDRLKIPREKILSNLEKYGNTSAATIPLMIDEAIRNHSIKQNDIIATSGFGAGLSWGAALIKWG</sequence>
<keyword id="KW-0012">Acyltransferase</keyword>
<keyword id="KW-0963">Cytoplasm</keyword>
<keyword id="KW-0275">Fatty acid biosynthesis</keyword>
<keyword id="KW-0276">Fatty acid metabolism</keyword>
<keyword id="KW-0444">Lipid biosynthesis</keyword>
<keyword id="KW-0443">Lipid metabolism</keyword>
<keyword id="KW-0511">Multifunctional enzyme</keyword>
<keyword id="KW-0808">Transferase</keyword>
<proteinExistence type="inferred from homology"/>
<accession>A8G2E1</accession>
<gene>
    <name evidence="1" type="primary">fabH</name>
    <name type="ordered locus">P9215_01531</name>
</gene>
<evidence type="ECO:0000255" key="1">
    <source>
        <dbReference type="HAMAP-Rule" id="MF_01815"/>
    </source>
</evidence>
<organism>
    <name type="scientific">Prochlorococcus marinus (strain MIT 9215)</name>
    <dbReference type="NCBI Taxonomy" id="93060"/>
    <lineage>
        <taxon>Bacteria</taxon>
        <taxon>Bacillati</taxon>
        <taxon>Cyanobacteriota</taxon>
        <taxon>Cyanophyceae</taxon>
        <taxon>Synechococcales</taxon>
        <taxon>Prochlorococcaceae</taxon>
        <taxon>Prochlorococcus</taxon>
    </lineage>
</organism>
<protein>
    <recommendedName>
        <fullName evidence="1">Beta-ketoacyl-[acyl-carrier-protein] synthase III</fullName>
        <shortName evidence="1">Beta-ketoacyl-ACP synthase III</shortName>
        <shortName evidence="1">KAS III</shortName>
        <ecNumber evidence="1">2.3.1.180</ecNumber>
    </recommendedName>
    <alternativeName>
        <fullName evidence="1">3-oxoacyl-[acyl-carrier-protein] synthase 3</fullName>
    </alternativeName>
    <alternativeName>
        <fullName evidence="1">3-oxoacyl-[acyl-carrier-protein] synthase III</fullName>
    </alternativeName>
</protein>
<name>FABH_PROM2</name>
<reference key="1">
    <citation type="journal article" date="2007" name="PLoS Genet.">
        <title>Patterns and implications of gene gain and loss in the evolution of Prochlorococcus.</title>
        <authorList>
            <person name="Kettler G.C."/>
            <person name="Martiny A.C."/>
            <person name="Huang K."/>
            <person name="Zucker J."/>
            <person name="Coleman M.L."/>
            <person name="Rodrigue S."/>
            <person name="Chen F."/>
            <person name="Lapidus A."/>
            <person name="Ferriera S."/>
            <person name="Johnson J."/>
            <person name="Steglich C."/>
            <person name="Church G.M."/>
            <person name="Richardson P."/>
            <person name="Chisholm S.W."/>
        </authorList>
    </citation>
    <scope>NUCLEOTIDE SEQUENCE [LARGE SCALE GENOMIC DNA]</scope>
    <source>
        <strain>MIT 9215</strain>
    </source>
</reference>
<feature type="chain" id="PRO_1000070238" description="Beta-ketoacyl-[acyl-carrier-protein] synthase III">
    <location>
        <begin position="1"/>
        <end position="335"/>
    </location>
</feature>
<feature type="region of interest" description="ACP-binding" evidence="1">
    <location>
        <begin position="262"/>
        <end position="266"/>
    </location>
</feature>
<feature type="active site" evidence="1">
    <location>
        <position position="119"/>
    </location>
</feature>
<feature type="active site" evidence="1">
    <location>
        <position position="261"/>
    </location>
</feature>
<feature type="active site" evidence="1">
    <location>
        <position position="291"/>
    </location>
</feature>